<reference evidence="1" key="1">
    <citation type="submission" date="2008-07" db="UniProtKB">
        <authorList>
            <person name="Almagro L."/>
            <person name="Sabater Jara A.B."/>
            <person name="Pedreno M.A."/>
        </authorList>
    </citation>
    <scope>PROTEIN SEQUENCE</scope>
</reference>
<keyword id="KW-0903">Direct protein sequencing</keyword>
<evidence type="ECO:0000305" key="1"/>
<proteinExistence type="evidence at protein level"/>
<accession>P86086</accession>
<sequence>LAGTVPLANK</sequence>
<protein>
    <recommendedName>
        <fullName>Unknown protein 2</fullName>
    </recommendedName>
</protein>
<name>UP02_CAPCH</name>
<organism>
    <name type="scientific">Capsicum chinense</name>
    <name type="common">Scotch bonnet</name>
    <name type="synonym">Bonnet pepper</name>
    <dbReference type="NCBI Taxonomy" id="80379"/>
    <lineage>
        <taxon>Eukaryota</taxon>
        <taxon>Viridiplantae</taxon>
        <taxon>Streptophyta</taxon>
        <taxon>Embryophyta</taxon>
        <taxon>Tracheophyta</taxon>
        <taxon>Spermatophyta</taxon>
        <taxon>Magnoliopsida</taxon>
        <taxon>eudicotyledons</taxon>
        <taxon>Gunneridae</taxon>
        <taxon>Pentapetalae</taxon>
        <taxon>asterids</taxon>
        <taxon>lamiids</taxon>
        <taxon>Solanales</taxon>
        <taxon>Solanaceae</taxon>
        <taxon>Solanoideae</taxon>
        <taxon>Capsiceae</taxon>
        <taxon>Capsicum</taxon>
    </lineage>
</organism>
<feature type="chain" id="PRO_0000355606" description="Unknown protein 2">
    <location>
        <begin position="1" status="less than"/>
        <end position="10" status="greater than"/>
    </location>
</feature>
<feature type="unsure residue" description="L or I">
    <location>
        <position position="1"/>
    </location>
</feature>
<feature type="unsure residue" description="L or I">
    <location>
        <position position="7"/>
    </location>
</feature>
<feature type="unsure residue" description="K or Q">
    <location>
        <position position="10"/>
    </location>
</feature>
<feature type="non-terminal residue">
    <location>
        <position position="1"/>
    </location>
</feature>
<feature type="non-terminal residue">
    <location>
        <position position="10"/>
    </location>
</feature>